<gene>
    <name type="primary">KRTAP10-3</name>
    <name type="synonym">KAP10.3</name>
    <name type="synonym">KAP18-3</name>
    <name type="synonym">KRTAP10.3</name>
    <name type="synonym">KRTAP18-3</name>
    <name type="synonym">KRTAP18.3</name>
</gene>
<feature type="chain" id="PRO_0000185211" description="Keratin-associated protein 10-3">
    <location>
        <begin position="1"/>
        <end position="221"/>
    </location>
</feature>
<feature type="repeat" description="1">
    <location>
        <begin position="26"/>
        <end position="30"/>
    </location>
</feature>
<feature type="repeat" description="2">
    <location>
        <begin position="31"/>
        <end position="35"/>
    </location>
</feature>
<feature type="repeat" description="3">
    <location>
        <begin position="36"/>
        <end position="40"/>
    </location>
</feature>
<feature type="repeat" description="4">
    <location>
        <begin position="57"/>
        <end position="61"/>
    </location>
</feature>
<feature type="repeat" description="5">
    <location>
        <begin position="79"/>
        <end position="83"/>
    </location>
</feature>
<feature type="repeat" description="6">
    <location>
        <begin position="89"/>
        <end position="93"/>
    </location>
</feature>
<feature type="repeat" description="7">
    <location>
        <begin position="99"/>
        <end position="103"/>
    </location>
</feature>
<feature type="repeat" description="8">
    <location>
        <begin position="104"/>
        <end position="108"/>
    </location>
</feature>
<feature type="repeat" description="9">
    <location>
        <begin position="109"/>
        <end position="113"/>
    </location>
</feature>
<feature type="repeat" description="10">
    <location>
        <begin position="114"/>
        <end position="118"/>
    </location>
</feature>
<feature type="repeat" description="11">
    <location>
        <begin position="119"/>
        <end position="123"/>
    </location>
</feature>
<feature type="repeat" description="12">
    <location>
        <begin position="124"/>
        <end position="128"/>
    </location>
</feature>
<feature type="repeat" description="13">
    <location>
        <begin position="136"/>
        <end position="140"/>
    </location>
</feature>
<feature type="repeat" description="14">
    <location>
        <begin position="146"/>
        <end position="150"/>
    </location>
</feature>
<feature type="repeat" description="15">
    <location>
        <begin position="151"/>
        <end position="155"/>
    </location>
</feature>
<feature type="repeat" description="16">
    <location>
        <begin position="177"/>
        <end position="181"/>
    </location>
</feature>
<feature type="repeat" description="17">
    <location>
        <begin position="188"/>
        <end position="192"/>
    </location>
</feature>
<feature type="repeat" description="18">
    <location>
        <begin position="210"/>
        <end position="214"/>
    </location>
</feature>
<feature type="region of interest" description="18 X 5 AA repeats of C-C-X(3)">
    <location>
        <begin position="26"/>
        <end position="214"/>
    </location>
</feature>
<feature type="sequence variant" id="VAR_047850" description="In dbSNP:rs452472." evidence="3">
    <original>T</original>
    <variation>A</variation>
    <location>
        <position position="3"/>
    </location>
</feature>
<feature type="sequence variant" id="VAR_047851" description="In dbSNP:rs233252." evidence="1 2">
    <original>C</original>
    <variation>Y</variation>
    <location>
        <position position="170"/>
    </location>
</feature>
<feature type="sequence conflict" description="In Ref. 1; BAD01537 and 3; AAI33678." evidence="4" ref="1 3">
    <original>T</original>
    <variation>P</variation>
    <location>
        <position position="34"/>
    </location>
</feature>
<feature type="sequence conflict" description="In Ref. 3; AAI33678." evidence="4" ref="3">
    <original>P</original>
    <variation>L</variation>
    <location>
        <position position="39"/>
    </location>
</feature>
<feature type="sequence conflict" description="In Ref. 3; AAI33678." evidence="4" ref="3">
    <location>
        <begin position="165"/>
        <end position="191"/>
    </location>
</feature>
<reference key="1">
    <citation type="journal article" date="2004" name="Genomics">
        <title>A cluster of 21 keratin-associated protein genes within introns of another gene on human chromosome 21q22.3.</title>
        <authorList>
            <person name="Shibuya K."/>
            <person name="Obayashi I."/>
            <person name="Asakawa S."/>
            <person name="Minoshima S."/>
            <person name="Kudoh J."/>
            <person name="Shimizu N."/>
        </authorList>
    </citation>
    <scope>NUCLEOTIDE SEQUENCE [MRNA]</scope>
    <scope>TISSUE SPECIFICITY</scope>
    <scope>VARIANT TYR-170</scope>
    <source>
        <tissue>Hair root</tissue>
    </source>
</reference>
<reference key="2">
    <citation type="journal article" date="2000" name="Nature">
        <title>The DNA sequence of human chromosome 21.</title>
        <authorList>
            <person name="Hattori M."/>
            <person name="Fujiyama A."/>
            <person name="Taylor T.D."/>
            <person name="Watanabe H."/>
            <person name="Yada T."/>
            <person name="Park H.-S."/>
            <person name="Toyoda A."/>
            <person name="Ishii K."/>
            <person name="Totoki Y."/>
            <person name="Choi D.-K."/>
            <person name="Groner Y."/>
            <person name="Soeda E."/>
            <person name="Ohki M."/>
            <person name="Takagi T."/>
            <person name="Sakaki Y."/>
            <person name="Taudien S."/>
            <person name="Blechschmidt K."/>
            <person name="Polley A."/>
            <person name="Menzel U."/>
            <person name="Delabar J."/>
            <person name="Kumpf K."/>
            <person name="Lehmann R."/>
            <person name="Patterson D."/>
            <person name="Reichwald K."/>
            <person name="Rump A."/>
            <person name="Schillhabel M."/>
            <person name="Schudy A."/>
            <person name="Zimmermann W."/>
            <person name="Rosenthal A."/>
            <person name="Kudoh J."/>
            <person name="Shibuya K."/>
            <person name="Kawasaki K."/>
            <person name="Asakawa S."/>
            <person name="Shintani A."/>
            <person name="Sasaki T."/>
            <person name="Nagamine K."/>
            <person name="Mitsuyama S."/>
            <person name="Antonarakis S.E."/>
            <person name="Minoshima S."/>
            <person name="Shimizu N."/>
            <person name="Nordsiek G."/>
            <person name="Hornischer K."/>
            <person name="Brandt P."/>
            <person name="Scharfe M."/>
            <person name="Schoen O."/>
            <person name="Desario A."/>
            <person name="Reichelt J."/>
            <person name="Kauer G."/>
            <person name="Bloecker H."/>
            <person name="Ramser J."/>
            <person name="Beck A."/>
            <person name="Klages S."/>
            <person name="Hennig S."/>
            <person name="Riesselmann L."/>
            <person name="Dagand E."/>
            <person name="Wehrmeyer S."/>
            <person name="Borzym K."/>
            <person name="Gardiner K."/>
            <person name="Nizetic D."/>
            <person name="Francis F."/>
            <person name="Lehrach H."/>
            <person name="Reinhardt R."/>
            <person name="Yaspo M.-L."/>
        </authorList>
    </citation>
    <scope>NUCLEOTIDE SEQUENCE [LARGE SCALE GENOMIC DNA]</scope>
</reference>
<reference key="3">
    <citation type="journal article" date="2004" name="Genome Res.">
        <title>The status, quality, and expansion of the NIH full-length cDNA project: the Mammalian Gene Collection (MGC).</title>
        <authorList>
            <consortium name="The MGC Project Team"/>
        </authorList>
    </citation>
    <scope>NUCLEOTIDE SEQUENCE [LARGE SCALE MRNA]</scope>
    <scope>VARIANT ALA-3</scope>
</reference>
<reference key="4">
    <citation type="journal article" date="2004" name="J. Invest. Dermatol.">
        <title>Hair keratin associated proteins: characterization of a second high sulfur KAP gene domain on human chromosome 21.</title>
        <authorList>
            <person name="Rogers M.A."/>
            <person name="Langbein L."/>
            <person name="Winter H."/>
            <person name="Beckmann I."/>
            <person name="Praetzel S."/>
            <person name="Schweizer J."/>
        </authorList>
    </citation>
    <scope>NUCLEOTIDE SEQUENCE [MRNA] OF 167-221</scope>
    <scope>TISSUE SPECIFICITY</scope>
    <scope>VARIANT TYR-170</scope>
    <source>
        <tissue>Scalp</tissue>
    </source>
</reference>
<keyword id="KW-0416">Keratin</keyword>
<keyword id="KW-1267">Proteomics identification</keyword>
<keyword id="KW-1185">Reference proteome</keyword>
<keyword id="KW-0677">Repeat</keyword>
<protein>
    <recommendedName>
        <fullName>Keratin-associated protein 10-3</fullName>
    </recommendedName>
    <alternativeName>
        <fullName>High sulfur keratin-associated protein 10.3</fullName>
    </alternativeName>
    <alternativeName>
        <fullName>Keratin-associated protein 10.3</fullName>
    </alternativeName>
    <alternativeName>
        <fullName>Keratin-associated protein 18-3</fullName>
    </alternativeName>
    <alternativeName>
        <fullName>Keratin-associated protein 18.3</fullName>
    </alternativeName>
</protein>
<sequence>MATSTMSVCSSAYSDSWQVDACPESCCEPPCCATSCCAPAPCLTLVCTPVSCVSSPCCQAACEPSPCQSGCTSSCTPSCCQQSSCQPACCTSSPCQQACCVPVCCKPVCCVPVCCKPVCCKPICCVPVCSGASSSCCQQSSRQPACCTTSCCRPSSSVSLLCRPVCRSTCCVPIPSCCAPASTCQPSCCRPASCVSLLCRPTCSRLSSACCGLSSGQKSSC</sequence>
<evidence type="ECO:0000269" key="1">
    <source>
    </source>
</evidence>
<evidence type="ECO:0000269" key="2">
    <source>
    </source>
</evidence>
<evidence type="ECO:0000269" key="3">
    <source>
    </source>
</evidence>
<evidence type="ECO:0000305" key="4"/>
<dbReference type="EMBL" id="AB076350">
    <property type="protein sequence ID" value="BAD01537.1"/>
    <property type="molecule type" value="mRNA"/>
</dbReference>
<dbReference type="EMBL" id="AP001067">
    <property type="status" value="NOT_ANNOTATED_CDS"/>
    <property type="molecule type" value="Genomic_DNA"/>
</dbReference>
<dbReference type="EMBL" id="BC133677">
    <property type="protein sequence ID" value="AAI33678.1"/>
    <property type="molecule type" value="mRNA"/>
</dbReference>
<dbReference type="EMBL" id="AJ566383">
    <property type="protein sequence ID" value="CAD97463.1"/>
    <property type="molecule type" value="mRNA"/>
</dbReference>
<dbReference type="CCDS" id="CCDS42956.1"/>
<dbReference type="RefSeq" id="NP_941969.2">
    <property type="nucleotide sequence ID" value="NM_198696.3"/>
</dbReference>
<dbReference type="BioGRID" id="132133">
    <property type="interactions" value="294"/>
</dbReference>
<dbReference type="FunCoup" id="P60369">
    <property type="interactions" value="39"/>
</dbReference>
<dbReference type="IntAct" id="P60369">
    <property type="interactions" value="8"/>
</dbReference>
<dbReference type="STRING" id="9606.ENSP00000375478"/>
<dbReference type="BioMuta" id="KRTAP10-3"/>
<dbReference type="DMDM" id="218511664"/>
<dbReference type="MassIVE" id="P60369"/>
<dbReference type="PaxDb" id="9606-ENSP00000375478"/>
<dbReference type="PeptideAtlas" id="P60369"/>
<dbReference type="ProteomicsDB" id="57198"/>
<dbReference type="DNASU" id="386682"/>
<dbReference type="Ensembl" id="ENST00000391620.2">
    <property type="protein sequence ID" value="ENSP00000375478.1"/>
    <property type="gene ID" value="ENSG00000212935.2"/>
</dbReference>
<dbReference type="GeneID" id="386682"/>
<dbReference type="KEGG" id="hsa:386682"/>
<dbReference type="MANE-Select" id="ENST00000391620.2">
    <property type="protein sequence ID" value="ENSP00000375478.1"/>
    <property type="RefSeq nucleotide sequence ID" value="NM_198696.3"/>
    <property type="RefSeq protein sequence ID" value="NP_941969.2"/>
</dbReference>
<dbReference type="UCSC" id="uc002zfj.2">
    <property type="organism name" value="human"/>
</dbReference>
<dbReference type="AGR" id="HGNC:22968"/>
<dbReference type="CTD" id="386682"/>
<dbReference type="DisGeNET" id="386682"/>
<dbReference type="GeneCards" id="KRTAP10-3"/>
<dbReference type="HGNC" id="HGNC:22968">
    <property type="gene designation" value="KRTAP10-3"/>
</dbReference>
<dbReference type="HPA" id="ENSG00000212935">
    <property type="expression patterns" value="Tissue enriched (skin)"/>
</dbReference>
<dbReference type="neXtProt" id="NX_P60369"/>
<dbReference type="PharmGKB" id="PA134941853"/>
<dbReference type="VEuPathDB" id="HostDB:ENSG00000212935"/>
<dbReference type="eggNOG" id="KOG4726">
    <property type="taxonomic scope" value="Eukaryota"/>
</dbReference>
<dbReference type="GeneTree" id="ENSGT00940000158579"/>
<dbReference type="HOGENOM" id="CLU_062832_0_0_1"/>
<dbReference type="InParanoid" id="P60369"/>
<dbReference type="OMA" id="LARMCSP"/>
<dbReference type="OrthoDB" id="9635131at2759"/>
<dbReference type="PAN-GO" id="P60369">
    <property type="GO annotations" value="0 GO annotations based on evolutionary models"/>
</dbReference>
<dbReference type="TreeFam" id="TF351356"/>
<dbReference type="PathwayCommons" id="P60369"/>
<dbReference type="Reactome" id="R-HSA-6805567">
    <property type="pathway name" value="Keratinization"/>
</dbReference>
<dbReference type="SignaLink" id="P60369"/>
<dbReference type="BioGRID-ORCS" id="386682">
    <property type="hits" value="15 hits in 1130 CRISPR screens"/>
</dbReference>
<dbReference type="GenomeRNAi" id="386682"/>
<dbReference type="Pharos" id="P60369">
    <property type="development level" value="Tdark"/>
</dbReference>
<dbReference type="PRO" id="PR:P60369"/>
<dbReference type="Proteomes" id="UP000005640">
    <property type="component" value="Chromosome 21"/>
</dbReference>
<dbReference type="RNAct" id="P60369">
    <property type="molecule type" value="protein"/>
</dbReference>
<dbReference type="Bgee" id="ENSG00000212935">
    <property type="expression patterns" value="Expressed in skin of abdomen and 13 other cell types or tissues"/>
</dbReference>
<dbReference type="GO" id="GO:0005829">
    <property type="term" value="C:cytosol"/>
    <property type="evidence" value="ECO:0000304"/>
    <property type="project" value="Reactome"/>
</dbReference>
<dbReference type="GO" id="GO:0045095">
    <property type="term" value="C:keratin filament"/>
    <property type="evidence" value="ECO:0007669"/>
    <property type="project" value="InterPro"/>
</dbReference>
<dbReference type="InterPro" id="IPR002494">
    <property type="entry name" value="KAP"/>
</dbReference>
<dbReference type="PANTHER" id="PTHR23262">
    <property type="entry name" value="KERATIN ASSOCIATED PROTEIN"/>
    <property type="match status" value="1"/>
</dbReference>
<dbReference type="PANTHER" id="PTHR23262:SF175">
    <property type="entry name" value="KERATIN-ASSOCIATED PROTEIN 10-3"/>
    <property type="match status" value="1"/>
</dbReference>
<dbReference type="Pfam" id="PF13885">
    <property type="entry name" value="Keratin_B2_2"/>
    <property type="match status" value="2"/>
</dbReference>
<proteinExistence type="evidence at protein level"/>
<accession>P60369</accession>
<accession>A3KN67</accession>
<accession>Q70LJ4</accession>
<organism>
    <name type="scientific">Homo sapiens</name>
    <name type="common">Human</name>
    <dbReference type="NCBI Taxonomy" id="9606"/>
    <lineage>
        <taxon>Eukaryota</taxon>
        <taxon>Metazoa</taxon>
        <taxon>Chordata</taxon>
        <taxon>Craniata</taxon>
        <taxon>Vertebrata</taxon>
        <taxon>Euteleostomi</taxon>
        <taxon>Mammalia</taxon>
        <taxon>Eutheria</taxon>
        <taxon>Euarchontoglires</taxon>
        <taxon>Primates</taxon>
        <taxon>Haplorrhini</taxon>
        <taxon>Catarrhini</taxon>
        <taxon>Hominidae</taxon>
        <taxon>Homo</taxon>
    </lineage>
</organism>
<comment type="function">
    <text>In the hair cortex, hair keratin intermediate filaments are embedded in an interfilamentous matrix, consisting of hair keratin-associated proteins (KRTAP), which are essential for the formation of a rigid and resistant hair shaft through their extensive disulfide bond cross-linking with abundant cysteine residues of hair keratins. The matrix proteins include the high-sulfur and high-glycine-tyrosine keratins.</text>
</comment>
<comment type="subunit">
    <text>Interacts with hair keratins.</text>
</comment>
<comment type="tissue specificity">
    <text evidence="1 2">Restricted to a narrow region of the hair fiber cuticle, lying approximately 20 cell layers above the apex of the dermal papilla of the hair root; not detected in any other tissues.</text>
</comment>
<comment type="similarity">
    <text evidence="4">Belongs to the KRTAP type 10 family.</text>
</comment>
<name>KR103_HUMAN</name>